<organism>
    <name type="scientific">Clostridium perfringens (strain ATCC 13124 / DSM 756 / JCM 1290 / NCIMB 6125 / NCTC 8237 / Type A)</name>
    <dbReference type="NCBI Taxonomy" id="195103"/>
    <lineage>
        <taxon>Bacteria</taxon>
        <taxon>Bacillati</taxon>
        <taxon>Bacillota</taxon>
        <taxon>Clostridia</taxon>
        <taxon>Eubacteriales</taxon>
        <taxon>Clostridiaceae</taxon>
        <taxon>Clostridium</taxon>
    </lineage>
</organism>
<gene>
    <name evidence="1" type="primary">murG</name>
    <name type="ordered locus">CPF_2320</name>
</gene>
<evidence type="ECO:0000255" key="1">
    <source>
        <dbReference type="HAMAP-Rule" id="MF_00033"/>
    </source>
</evidence>
<dbReference type="EC" id="2.4.1.227" evidence="1"/>
<dbReference type="EMBL" id="CP000246">
    <property type="protein sequence ID" value="ABG83915.2"/>
    <property type="molecule type" value="Genomic_DNA"/>
</dbReference>
<dbReference type="RefSeq" id="WP_003451085.1">
    <property type="nucleotide sequence ID" value="NC_008261.1"/>
</dbReference>
<dbReference type="SMR" id="Q0TNP7"/>
<dbReference type="STRING" id="195103.CPF_2320"/>
<dbReference type="CAZy" id="GT28">
    <property type="family name" value="Glycosyltransferase Family 28"/>
</dbReference>
<dbReference type="PaxDb" id="195103-CPF_2320"/>
<dbReference type="KEGG" id="cpf:CPF_2320"/>
<dbReference type="eggNOG" id="COG0707">
    <property type="taxonomic scope" value="Bacteria"/>
</dbReference>
<dbReference type="HOGENOM" id="CLU_037404_0_0_9"/>
<dbReference type="UniPathway" id="UPA00219"/>
<dbReference type="Proteomes" id="UP000001823">
    <property type="component" value="Chromosome"/>
</dbReference>
<dbReference type="GO" id="GO:0005886">
    <property type="term" value="C:plasma membrane"/>
    <property type="evidence" value="ECO:0007669"/>
    <property type="project" value="UniProtKB-SubCell"/>
</dbReference>
<dbReference type="GO" id="GO:0051991">
    <property type="term" value="F:UDP-N-acetyl-D-glucosamine:N-acetylmuramoyl-L-alanyl-D-glutamyl-meso-2,6-diaminopimelyl-D-alanyl-D-alanine-diphosphoundecaprenol 4-beta-N-acetylglucosaminlytransferase activity"/>
    <property type="evidence" value="ECO:0007669"/>
    <property type="project" value="RHEA"/>
</dbReference>
<dbReference type="GO" id="GO:0050511">
    <property type="term" value="F:undecaprenyldiphospho-muramoylpentapeptide beta-N-acetylglucosaminyltransferase activity"/>
    <property type="evidence" value="ECO:0007669"/>
    <property type="project" value="UniProtKB-UniRule"/>
</dbReference>
<dbReference type="GO" id="GO:0005975">
    <property type="term" value="P:carbohydrate metabolic process"/>
    <property type="evidence" value="ECO:0007669"/>
    <property type="project" value="InterPro"/>
</dbReference>
<dbReference type="GO" id="GO:0051301">
    <property type="term" value="P:cell division"/>
    <property type="evidence" value="ECO:0007669"/>
    <property type="project" value="UniProtKB-KW"/>
</dbReference>
<dbReference type="GO" id="GO:0071555">
    <property type="term" value="P:cell wall organization"/>
    <property type="evidence" value="ECO:0007669"/>
    <property type="project" value="UniProtKB-KW"/>
</dbReference>
<dbReference type="GO" id="GO:0030259">
    <property type="term" value="P:lipid glycosylation"/>
    <property type="evidence" value="ECO:0007669"/>
    <property type="project" value="UniProtKB-UniRule"/>
</dbReference>
<dbReference type="GO" id="GO:0009252">
    <property type="term" value="P:peptidoglycan biosynthetic process"/>
    <property type="evidence" value="ECO:0007669"/>
    <property type="project" value="UniProtKB-UniRule"/>
</dbReference>
<dbReference type="GO" id="GO:0008360">
    <property type="term" value="P:regulation of cell shape"/>
    <property type="evidence" value="ECO:0007669"/>
    <property type="project" value="UniProtKB-KW"/>
</dbReference>
<dbReference type="CDD" id="cd03785">
    <property type="entry name" value="GT28_MurG"/>
    <property type="match status" value="1"/>
</dbReference>
<dbReference type="Gene3D" id="3.40.50.2000">
    <property type="entry name" value="Glycogen Phosphorylase B"/>
    <property type="match status" value="2"/>
</dbReference>
<dbReference type="HAMAP" id="MF_00033">
    <property type="entry name" value="MurG"/>
    <property type="match status" value="1"/>
</dbReference>
<dbReference type="InterPro" id="IPR006009">
    <property type="entry name" value="GlcNAc_MurG"/>
</dbReference>
<dbReference type="InterPro" id="IPR007235">
    <property type="entry name" value="Glyco_trans_28_C"/>
</dbReference>
<dbReference type="InterPro" id="IPR004276">
    <property type="entry name" value="GlycoTrans_28_N"/>
</dbReference>
<dbReference type="NCBIfam" id="TIGR01133">
    <property type="entry name" value="murG"/>
    <property type="match status" value="1"/>
</dbReference>
<dbReference type="NCBIfam" id="NF009102">
    <property type="entry name" value="PRK12446.1"/>
    <property type="match status" value="1"/>
</dbReference>
<dbReference type="PANTHER" id="PTHR21015:SF27">
    <property type="entry name" value="UDP-N-ACETYLGLUCOSAMINE--N-ACETYLMURAMYL-(PENTAPEPTIDE) PYROPHOSPHORYL-UNDECAPRENOL N-ACETYLGLUCOSAMINE TRANSFERASE"/>
    <property type="match status" value="1"/>
</dbReference>
<dbReference type="PANTHER" id="PTHR21015">
    <property type="entry name" value="UDP-N-ACETYLGLUCOSAMINE--N-ACETYLMURAMYL-(PENTAPEPTIDE) PYROPHOSPHORYL-UNDECAPRENOL N-ACETYLGLUCOSAMINE TRANSFERASE 1"/>
    <property type="match status" value="1"/>
</dbReference>
<dbReference type="Pfam" id="PF04101">
    <property type="entry name" value="Glyco_tran_28_C"/>
    <property type="match status" value="1"/>
</dbReference>
<dbReference type="Pfam" id="PF03033">
    <property type="entry name" value="Glyco_transf_28"/>
    <property type="match status" value="1"/>
</dbReference>
<dbReference type="SUPFAM" id="SSF53756">
    <property type="entry name" value="UDP-Glycosyltransferase/glycogen phosphorylase"/>
    <property type="match status" value="1"/>
</dbReference>
<keyword id="KW-0131">Cell cycle</keyword>
<keyword id="KW-0132">Cell division</keyword>
<keyword id="KW-1003">Cell membrane</keyword>
<keyword id="KW-0133">Cell shape</keyword>
<keyword id="KW-0961">Cell wall biogenesis/degradation</keyword>
<keyword id="KW-0328">Glycosyltransferase</keyword>
<keyword id="KW-0472">Membrane</keyword>
<keyword id="KW-0573">Peptidoglycan synthesis</keyword>
<keyword id="KW-0808">Transferase</keyword>
<proteinExistence type="inferred from homology"/>
<feature type="chain" id="PRO_0000315086" description="UDP-N-acetylglucosamine--N-acetylmuramyl-(pentapeptide) pyrophosphoryl-undecaprenol N-acetylglucosamine transferase">
    <location>
        <begin position="1"/>
        <end position="357"/>
    </location>
</feature>
<feature type="binding site" evidence="1">
    <location>
        <begin position="13"/>
        <end position="15"/>
    </location>
    <ligand>
        <name>UDP-N-acetyl-alpha-D-glucosamine</name>
        <dbReference type="ChEBI" id="CHEBI:57705"/>
    </ligand>
</feature>
<feature type="binding site" evidence="1">
    <location>
        <position position="166"/>
    </location>
    <ligand>
        <name>UDP-N-acetyl-alpha-D-glucosamine</name>
        <dbReference type="ChEBI" id="CHEBI:57705"/>
    </ligand>
</feature>
<feature type="binding site" evidence="1">
    <location>
        <position position="196"/>
    </location>
    <ligand>
        <name>UDP-N-acetyl-alpha-D-glucosamine</name>
        <dbReference type="ChEBI" id="CHEBI:57705"/>
    </ligand>
</feature>
<feature type="binding site" evidence="1">
    <location>
        <position position="291"/>
    </location>
    <ligand>
        <name>UDP-N-acetyl-alpha-D-glucosamine</name>
        <dbReference type="ChEBI" id="CHEBI:57705"/>
    </ligand>
</feature>
<comment type="function">
    <text evidence="1">Cell wall formation. Catalyzes the transfer of a GlcNAc subunit on undecaprenyl-pyrophosphoryl-MurNAc-pentapeptide (lipid intermediate I) to form undecaprenyl-pyrophosphoryl-MurNAc-(pentapeptide)GlcNAc (lipid intermediate II).</text>
</comment>
<comment type="catalytic activity">
    <reaction evidence="1">
        <text>di-trans,octa-cis-undecaprenyl diphospho-N-acetyl-alpha-D-muramoyl-L-alanyl-D-glutamyl-meso-2,6-diaminopimeloyl-D-alanyl-D-alanine + UDP-N-acetyl-alpha-D-glucosamine = di-trans,octa-cis-undecaprenyl diphospho-[N-acetyl-alpha-D-glucosaminyl-(1-&gt;4)]-N-acetyl-alpha-D-muramoyl-L-alanyl-D-glutamyl-meso-2,6-diaminopimeloyl-D-alanyl-D-alanine + UDP + H(+)</text>
        <dbReference type="Rhea" id="RHEA:31227"/>
        <dbReference type="ChEBI" id="CHEBI:15378"/>
        <dbReference type="ChEBI" id="CHEBI:57705"/>
        <dbReference type="ChEBI" id="CHEBI:58223"/>
        <dbReference type="ChEBI" id="CHEBI:61387"/>
        <dbReference type="ChEBI" id="CHEBI:61388"/>
        <dbReference type="EC" id="2.4.1.227"/>
    </reaction>
</comment>
<comment type="pathway">
    <text evidence="1">Cell wall biogenesis; peptidoglycan biosynthesis.</text>
</comment>
<comment type="subcellular location">
    <subcellularLocation>
        <location evidence="1">Cell membrane</location>
        <topology evidence="1">Peripheral membrane protein</topology>
        <orientation evidence="1">Cytoplasmic side</orientation>
    </subcellularLocation>
</comment>
<comment type="similarity">
    <text evidence="1">Belongs to the glycosyltransferase 28 family. MurG subfamily.</text>
</comment>
<name>MURG_CLOP1</name>
<accession>Q0TNP7</accession>
<protein>
    <recommendedName>
        <fullName evidence="1">UDP-N-acetylglucosamine--N-acetylmuramyl-(pentapeptide) pyrophosphoryl-undecaprenol N-acetylglucosamine transferase</fullName>
        <ecNumber evidence="1">2.4.1.227</ecNumber>
    </recommendedName>
    <alternativeName>
        <fullName evidence="1">Undecaprenyl-PP-MurNAc-pentapeptide-UDPGlcNAc GlcNAc transferase</fullName>
    </alternativeName>
</protein>
<sequence>MKKYKIIMTGGGSAGHVTPNLALVPKLKELGFEIKYIGSKNGIEKEIITKENIPYYSISSGKLRRYFDIKNFTDPFKVLKGVMDASRILSKEKPDVIFSKGGFVTVPVVIAASMKKIPVVSHESDLTPGLANKIASPFCDTLCVTFPESLKYIKDNKGELTGTPIREDLLKGDKERGRKFCNFKENKKVLMIIGGSLGSKVINESVRKILNEILKEYNVIHLCGKGNLDESLKNLDGYRQYEYISEELPDLMALADLVISRAGANTIFELLALRKLNILIPLSANASRGDQVLNANSFEKSGYSMVIKEEELNSELLLKSIKDLEKNREKYLNSMKMSKIGNGVNNIIDIIKKSAHM</sequence>
<reference key="1">
    <citation type="journal article" date="2006" name="Genome Res.">
        <title>Skewed genomic variability in strains of the toxigenic bacterial pathogen, Clostridium perfringens.</title>
        <authorList>
            <person name="Myers G.S.A."/>
            <person name="Rasko D.A."/>
            <person name="Cheung J.K."/>
            <person name="Ravel J."/>
            <person name="Seshadri R."/>
            <person name="DeBoy R.T."/>
            <person name="Ren Q."/>
            <person name="Varga J."/>
            <person name="Awad M.M."/>
            <person name="Brinkac L.M."/>
            <person name="Daugherty S.C."/>
            <person name="Haft D.H."/>
            <person name="Dodson R.J."/>
            <person name="Madupu R."/>
            <person name="Nelson W.C."/>
            <person name="Rosovitz M.J."/>
            <person name="Sullivan S.A."/>
            <person name="Khouri H."/>
            <person name="Dimitrov G.I."/>
            <person name="Watkins K.L."/>
            <person name="Mulligan S."/>
            <person name="Benton J."/>
            <person name="Radune D."/>
            <person name="Fisher D.J."/>
            <person name="Atkins H.S."/>
            <person name="Hiscox T."/>
            <person name="Jost B.H."/>
            <person name="Billington S.J."/>
            <person name="Songer J.G."/>
            <person name="McClane B.A."/>
            <person name="Titball R.W."/>
            <person name="Rood J.I."/>
            <person name="Melville S.B."/>
            <person name="Paulsen I.T."/>
        </authorList>
    </citation>
    <scope>NUCLEOTIDE SEQUENCE [LARGE SCALE GENOMIC DNA]</scope>
    <source>
        <strain>ATCC 13124 / DSM 756 / JCM 1290 / NCIMB 6125 / NCTC 8237 / S 107 / Type A</strain>
    </source>
</reference>